<keyword id="KW-1185">Reference proteome</keyword>
<keyword id="KW-0808">Transferase</keyword>
<name>GST6_CAEEL</name>
<sequence length="206" mass="23617">MVHYKLVYFPLRARAEIARQIFAYAGQDYSEENLSFEQWPARKNNTPFGQLPILEVDGKPLGQSYAIARYLAREFGIAGQNDTEAAEVDAIADQFKDYLNDVSPYLTVLAGFKPGDKDQLRTDVFVPAFKKNFEFFENILASNHSGFFVGNSLTWVDLLISQHVQDILDKDLAVVEEFKKVLAHRKKVQSIDRIQKYIANRPDYPF</sequence>
<gene>
    <name type="primary">gst-6</name>
    <name type="ORF">F11G11.3</name>
</gene>
<evidence type="ECO:0000250" key="1">
    <source>
        <dbReference type="UniProtKB" id="O60760"/>
    </source>
</evidence>
<evidence type="ECO:0000250" key="2">
    <source>
        <dbReference type="UniProtKB" id="P46088"/>
    </source>
</evidence>
<evidence type="ECO:0000250" key="3">
    <source>
        <dbReference type="UniProtKB" id="P46436"/>
    </source>
</evidence>
<evidence type="ECO:0000305" key="4"/>
<proteinExistence type="inferred from homology"/>
<dbReference type="EC" id="2.5.1.18"/>
<dbReference type="EMBL" id="FO081119">
    <property type="protein sequence ID" value="CCD69256.1"/>
    <property type="molecule type" value="Genomic_DNA"/>
</dbReference>
<dbReference type="PIR" id="T29984">
    <property type="entry name" value="T29984"/>
</dbReference>
<dbReference type="RefSeq" id="NP_494882.2">
    <property type="nucleotide sequence ID" value="NM_062481.7"/>
</dbReference>
<dbReference type="SMR" id="P91252"/>
<dbReference type="BioGRID" id="39195">
    <property type="interactions" value="9"/>
</dbReference>
<dbReference type="FunCoup" id="P91252">
    <property type="interactions" value="118"/>
</dbReference>
<dbReference type="STRING" id="6239.F11G11.3.1"/>
<dbReference type="PaxDb" id="6239-F11G11.3"/>
<dbReference type="PeptideAtlas" id="P91252"/>
<dbReference type="EnsemblMetazoa" id="F11G11.3.1">
    <property type="protein sequence ID" value="F11G11.3.1"/>
    <property type="gene ID" value="WBGene00001754"/>
</dbReference>
<dbReference type="GeneID" id="173841"/>
<dbReference type="KEGG" id="cel:CELE_F11G11.3"/>
<dbReference type="UCSC" id="F11G11.3">
    <property type="organism name" value="c. elegans"/>
</dbReference>
<dbReference type="AGR" id="WB:WBGene00001754"/>
<dbReference type="CTD" id="173841"/>
<dbReference type="WormBase" id="F11G11.3">
    <property type="protein sequence ID" value="CE32622"/>
    <property type="gene ID" value="WBGene00001754"/>
    <property type="gene designation" value="gst-6"/>
</dbReference>
<dbReference type="eggNOG" id="KOG1695">
    <property type="taxonomic scope" value="Eukaryota"/>
</dbReference>
<dbReference type="GeneTree" id="ENSGT00970000196017"/>
<dbReference type="HOGENOM" id="CLU_039475_1_0_1"/>
<dbReference type="InParanoid" id="P91252"/>
<dbReference type="OMA" id="QDFEDEA"/>
<dbReference type="OrthoDB" id="414243at2759"/>
<dbReference type="PhylomeDB" id="P91252"/>
<dbReference type="PRO" id="PR:P91252"/>
<dbReference type="Proteomes" id="UP000001940">
    <property type="component" value="Chromosome II"/>
</dbReference>
<dbReference type="GO" id="GO:0004364">
    <property type="term" value="F:glutathione transferase activity"/>
    <property type="evidence" value="ECO:0000318"/>
    <property type="project" value="GO_Central"/>
</dbReference>
<dbReference type="GO" id="GO:0006749">
    <property type="term" value="P:glutathione metabolic process"/>
    <property type="evidence" value="ECO:0000318"/>
    <property type="project" value="GO_Central"/>
</dbReference>
<dbReference type="GO" id="GO:0045087">
    <property type="term" value="P:innate immune response"/>
    <property type="evidence" value="ECO:0007007"/>
    <property type="project" value="WormBase"/>
</dbReference>
<dbReference type="CDD" id="cd03192">
    <property type="entry name" value="GST_C_Sigma_like"/>
    <property type="match status" value="1"/>
</dbReference>
<dbReference type="CDD" id="cd03039">
    <property type="entry name" value="GST_N_Sigma_like"/>
    <property type="match status" value="1"/>
</dbReference>
<dbReference type="FunFam" id="1.20.1050.10:FF:000031">
    <property type="entry name" value="Glutathione S-Transferase"/>
    <property type="match status" value="1"/>
</dbReference>
<dbReference type="FunFam" id="3.40.30.10:FF:000035">
    <property type="entry name" value="hematopoietic prostaglandin D synthase"/>
    <property type="match status" value="1"/>
</dbReference>
<dbReference type="Gene3D" id="1.20.1050.10">
    <property type="match status" value="1"/>
</dbReference>
<dbReference type="Gene3D" id="3.40.30.10">
    <property type="entry name" value="Glutaredoxin"/>
    <property type="match status" value="1"/>
</dbReference>
<dbReference type="InterPro" id="IPR010987">
    <property type="entry name" value="Glutathione-S-Trfase_C-like"/>
</dbReference>
<dbReference type="InterPro" id="IPR036282">
    <property type="entry name" value="Glutathione-S-Trfase_C_sf"/>
</dbReference>
<dbReference type="InterPro" id="IPR004045">
    <property type="entry name" value="Glutathione_S-Trfase_N"/>
</dbReference>
<dbReference type="InterPro" id="IPR004046">
    <property type="entry name" value="GST_C"/>
</dbReference>
<dbReference type="InterPro" id="IPR050213">
    <property type="entry name" value="GST_superfamily"/>
</dbReference>
<dbReference type="InterPro" id="IPR036249">
    <property type="entry name" value="Thioredoxin-like_sf"/>
</dbReference>
<dbReference type="PANTHER" id="PTHR11571">
    <property type="entry name" value="GLUTATHIONE S-TRANSFERASE"/>
    <property type="match status" value="1"/>
</dbReference>
<dbReference type="PANTHER" id="PTHR11571:SF160">
    <property type="entry name" value="GLUTATHIONE S-TRANSFERASE 6-RELATED"/>
    <property type="match status" value="1"/>
</dbReference>
<dbReference type="Pfam" id="PF14497">
    <property type="entry name" value="GST_C_3"/>
    <property type="match status" value="1"/>
</dbReference>
<dbReference type="Pfam" id="PF02798">
    <property type="entry name" value="GST_N"/>
    <property type="match status" value="1"/>
</dbReference>
<dbReference type="SFLD" id="SFLDG01205">
    <property type="entry name" value="AMPS.1"/>
    <property type="match status" value="1"/>
</dbReference>
<dbReference type="SFLD" id="SFLDG00363">
    <property type="entry name" value="AMPS_(cytGST):_Alpha-__Mu-__Pi"/>
    <property type="match status" value="1"/>
</dbReference>
<dbReference type="SUPFAM" id="SSF47616">
    <property type="entry name" value="GST C-terminal domain-like"/>
    <property type="match status" value="1"/>
</dbReference>
<dbReference type="SUPFAM" id="SSF52833">
    <property type="entry name" value="Thioredoxin-like"/>
    <property type="match status" value="1"/>
</dbReference>
<dbReference type="PROSITE" id="PS50405">
    <property type="entry name" value="GST_CTER"/>
    <property type="match status" value="1"/>
</dbReference>
<dbReference type="PROSITE" id="PS50404">
    <property type="entry name" value="GST_NTER"/>
    <property type="match status" value="1"/>
</dbReference>
<protein>
    <recommendedName>
        <fullName>Probable glutathione S-transferase 6</fullName>
        <ecNumber>2.5.1.18</ecNumber>
    </recommendedName>
    <alternativeName>
        <fullName>GST class-sigma</fullName>
    </alternativeName>
</protein>
<reference key="1">
    <citation type="journal article" date="1998" name="Science">
        <title>Genome sequence of the nematode C. elegans: a platform for investigating biology.</title>
        <authorList>
            <consortium name="The C. elegans sequencing consortium"/>
        </authorList>
    </citation>
    <scope>NUCLEOTIDE SEQUENCE [LARGE SCALE GENOMIC DNA]</scope>
    <source>
        <strain>Bristol N2</strain>
    </source>
</reference>
<comment type="function">
    <text evidence="3">Conjugation of reduced glutathione to a wide number of exogenous and endogenous hydrophobic electrophiles.</text>
</comment>
<comment type="catalytic activity">
    <reaction evidence="3">
        <text>RX + glutathione = an S-substituted glutathione + a halide anion + H(+)</text>
        <dbReference type="Rhea" id="RHEA:16437"/>
        <dbReference type="ChEBI" id="CHEBI:15378"/>
        <dbReference type="ChEBI" id="CHEBI:16042"/>
        <dbReference type="ChEBI" id="CHEBI:17792"/>
        <dbReference type="ChEBI" id="CHEBI:57925"/>
        <dbReference type="ChEBI" id="CHEBI:90779"/>
        <dbReference type="EC" id="2.5.1.18"/>
    </reaction>
</comment>
<comment type="similarity">
    <text evidence="4">Belongs to the GST superfamily. Sigma family.</text>
</comment>
<accession>P91252</accession>
<organism>
    <name type="scientific">Caenorhabditis elegans</name>
    <dbReference type="NCBI Taxonomy" id="6239"/>
    <lineage>
        <taxon>Eukaryota</taxon>
        <taxon>Metazoa</taxon>
        <taxon>Ecdysozoa</taxon>
        <taxon>Nematoda</taxon>
        <taxon>Chromadorea</taxon>
        <taxon>Rhabditida</taxon>
        <taxon>Rhabditina</taxon>
        <taxon>Rhabditomorpha</taxon>
        <taxon>Rhabditoidea</taxon>
        <taxon>Rhabditidae</taxon>
        <taxon>Peloderinae</taxon>
        <taxon>Caenorhabditis</taxon>
    </lineage>
</organism>
<feature type="chain" id="PRO_0000185929" description="Probable glutathione S-transferase 6">
    <location>
        <begin position="1"/>
        <end position="206"/>
    </location>
</feature>
<feature type="domain" description="GST N-terminal">
    <location>
        <begin position="2"/>
        <end position="79"/>
    </location>
</feature>
<feature type="domain" description="GST C-terminal">
    <location>
        <begin position="81"/>
        <end position="206"/>
    </location>
</feature>
<feature type="binding site" evidence="1">
    <location>
        <position position="8"/>
    </location>
    <ligand>
        <name>glutathione</name>
        <dbReference type="ChEBI" id="CHEBI:57925"/>
    </ligand>
</feature>
<feature type="binding site" evidence="1">
    <location>
        <position position="39"/>
    </location>
    <ligand>
        <name>glutathione</name>
        <dbReference type="ChEBI" id="CHEBI:57925"/>
    </ligand>
</feature>
<feature type="binding site" evidence="2">
    <location>
        <position position="43"/>
    </location>
    <ligand>
        <name>glutathione</name>
        <dbReference type="ChEBI" id="CHEBI:57925"/>
    </ligand>
</feature>
<feature type="binding site" evidence="1">
    <location>
        <begin position="49"/>
        <end position="51"/>
    </location>
    <ligand>
        <name>glutathione</name>
        <dbReference type="ChEBI" id="CHEBI:57925"/>
    </ligand>
</feature>
<feature type="binding site" evidence="1">
    <location>
        <begin position="63"/>
        <end position="64"/>
    </location>
    <ligand>
        <name>glutathione</name>
        <dbReference type="ChEBI" id="CHEBI:57925"/>
    </ligand>
</feature>